<gene>
    <name type="primary">Rhobtb3</name>
    <name type="synonym">Kiaa0878</name>
</gene>
<proteinExistence type="evidence at transcript level"/>
<reference key="1">
    <citation type="journal article" date="2002" name="Gene">
        <title>Genomic organization and expression profile of the small GTPases of the RhoBTB family in human and mouse.</title>
        <authorList>
            <person name="Ramos S."/>
            <person name="Khademi F."/>
            <person name="Somesh B.P."/>
            <person name="Rivero F."/>
        </authorList>
    </citation>
    <scope>NUCLEOTIDE SEQUENCE [MRNA]</scope>
    <scope>TISSUE SPECIFICITY</scope>
</reference>
<reference key="2">
    <citation type="journal article" date="2003" name="DNA Res.">
        <title>Prediction of the coding sequences of mouse homologues of KIAA gene: III. The complete nucleotide sequences of 500 mouse KIAA-homologous cDNAs identified by screening of terminal sequences of cDNA clones randomly sampled from size-fractionated libraries.</title>
        <authorList>
            <person name="Okazaki N."/>
            <person name="Kikuno R."/>
            <person name="Ohara R."/>
            <person name="Inamoto S."/>
            <person name="Koseki H."/>
            <person name="Hiraoka S."/>
            <person name="Saga Y."/>
            <person name="Nagase T."/>
            <person name="Ohara O."/>
            <person name="Koga H."/>
        </authorList>
    </citation>
    <scope>NUCLEOTIDE SEQUENCE [LARGE SCALE MRNA]</scope>
    <source>
        <tissue>Embryonic tail</tissue>
    </source>
</reference>
<reference key="3">
    <citation type="journal article" date="2005" name="Science">
        <title>The transcriptional landscape of the mammalian genome.</title>
        <authorList>
            <person name="Carninci P."/>
            <person name="Kasukawa T."/>
            <person name="Katayama S."/>
            <person name="Gough J."/>
            <person name="Frith M.C."/>
            <person name="Maeda N."/>
            <person name="Oyama R."/>
            <person name="Ravasi T."/>
            <person name="Lenhard B."/>
            <person name="Wells C."/>
            <person name="Kodzius R."/>
            <person name="Shimokawa K."/>
            <person name="Bajic V.B."/>
            <person name="Brenner S.E."/>
            <person name="Batalov S."/>
            <person name="Forrest A.R."/>
            <person name="Zavolan M."/>
            <person name="Davis M.J."/>
            <person name="Wilming L.G."/>
            <person name="Aidinis V."/>
            <person name="Allen J.E."/>
            <person name="Ambesi-Impiombato A."/>
            <person name="Apweiler R."/>
            <person name="Aturaliya R.N."/>
            <person name="Bailey T.L."/>
            <person name="Bansal M."/>
            <person name="Baxter L."/>
            <person name="Beisel K.W."/>
            <person name="Bersano T."/>
            <person name="Bono H."/>
            <person name="Chalk A.M."/>
            <person name="Chiu K.P."/>
            <person name="Choudhary V."/>
            <person name="Christoffels A."/>
            <person name="Clutterbuck D.R."/>
            <person name="Crowe M.L."/>
            <person name="Dalla E."/>
            <person name="Dalrymple B.P."/>
            <person name="de Bono B."/>
            <person name="Della Gatta G."/>
            <person name="di Bernardo D."/>
            <person name="Down T."/>
            <person name="Engstrom P."/>
            <person name="Fagiolini M."/>
            <person name="Faulkner G."/>
            <person name="Fletcher C.F."/>
            <person name="Fukushima T."/>
            <person name="Furuno M."/>
            <person name="Futaki S."/>
            <person name="Gariboldi M."/>
            <person name="Georgii-Hemming P."/>
            <person name="Gingeras T.R."/>
            <person name="Gojobori T."/>
            <person name="Green R.E."/>
            <person name="Gustincich S."/>
            <person name="Harbers M."/>
            <person name="Hayashi Y."/>
            <person name="Hensch T.K."/>
            <person name="Hirokawa N."/>
            <person name="Hill D."/>
            <person name="Huminiecki L."/>
            <person name="Iacono M."/>
            <person name="Ikeo K."/>
            <person name="Iwama A."/>
            <person name="Ishikawa T."/>
            <person name="Jakt M."/>
            <person name="Kanapin A."/>
            <person name="Katoh M."/>
            <person name="Kawasawa Y."/>
            <person name="Kelso J."/>
            <person name="Kitamura H."/>
            <person name="Kitano H."/>
            <person name="Kollias G."/>
            <person name="Krishnan S.P."/>
            <person name="Kruger A."/>
            <person name="Kummerfeld S.K."/>
            <person name="Kurochkin I.V."/>
            <person name="Lareau L.F."/>
            <person name="Lazarevic D."/>
            <person name="Lipovich L."/>
            <person name="Liu J."/>
            <person name="Liuni S."/>
            <person name="McWilliam S."/>
            <person name="Madan Babu M."/>
            <person name="Madera M."/>
            <person name="Marchionni L."/>
            <person name="Matsuda H."/>
            <person name="Matsuzawa S."/>
            <person name="Miki H."/>
            <person name="Mignone F."/>
            <person name="Miyake S."/>
            <person name="Morris K."/>
            <person name="Mottagui-Tabar S."/>
            <person name="Mulder N."/>
            <person name="Nakano N."/>
            <person name="Nakauchi H."/>
            <person name="Ng P."/>
            <person name="Nilsson R."/>
            <person name="Nishiguchi S."/>
            <person name="Nishikawa S."/>
            <person name="Nori F."/>
            <person name="Ohara O."/>
            <person name="Okazaki Y."/>
            <person name="Orlando V."/>
            <person name="Pang K.C."/>
            <person name="Pavan W.J."/>
            <person name="Pavesi G."/>
            <person name="Pesole G."/>
            <person name="Petrovsky N."/>
            <person name="Piazza S."/>
            <person name="Reed J."/>
            <person name="Reid J.F."/>
            <person name="Ring B.Z."/>
            <person name="Ringwald M."/>
            <person name="Rost B."/>
            <person name="Ruan Y."/>
            <person name="Salzberg S.L."/>
            <person name="Sandelin A."/>
            <person name="Schneider C."/>
            <person name="Schoenbach C."/>
            <person name="Sekiguchi K."/>
            <person name="Semple C.A."/>
            <person name="Seno S."/>
            <person name="Sessa L."/>
            <person name="Sheng Y."/>
            <person name="Shibata Y."/>
            <person name="Shimada H."/>
            <person name="Shimada K."/>
            <person name="Silva D."/>
            <person name="Sinclair B."/>
            <person name="Sperling S."/>
            <person name="Stupka E."/>
            <person name="Sugiura K."/>
            <person name="Sultana R."/>
            <person name="Takenaka Y."/>
            <person name="Taki K."/>
            <person name="Tammoja K."/>
            <person name="Tan S.L."/>
            <person name="Tang S."/>
            <person name="Taylor M.S."/>
            <person name="Tegner J."/>
            <person name="Teichmann S.A."/>
            <person name="Ueda H.R."/>
            <person name="van Nimwegen E."/>
            <person name="Verardo R."/>
            <person name="Wei C.L."/>
            <person name="Yagi K."/>
            <person name="Yamanishi H."/>
            <person name="Zabarovsky E."/>
            <person name="Zhu S."/>
            <person name="Zimmer A."/>
            <person name="Hide W."/>
            <person name="Bult C."/>
            <person name="Grimmond S.M."/>
            <person name="Teasdale R.D."/>
            <person name="Liu E.T."/>
            <person name="Brusic V."/>
            <person name="Quackenbush J."/>
            <person name="Wahlestedt C."/>
            <person name="Mattick J.S."/>
            <person name="Hume D.A."/>
            <person name="Kai C."/>
            <person name="Sasaki D."/>
            <person name="Tomaru Y."/>
            <person name="Fukuda S."/>
            <person name="Kanamori-Katayama M."/>
            <person name="Suzuki M."/>
            <person name="Aoki J."/>
            <person name="Arakawa T."/>
            <person name="Iida J."/>
            <person name="Imamura K."/>
            <person name="Itoh M."/>
            <person name="Kato T."/>
            <person name="Kawaji H."/>
            <person name="Kawagashira N."/>
            <person name="Kawashima T."/>
            <person name="Kojima M."/>
            <person name="Kondo S."/>
            <person name="Konno H."/>
            <person name="Nakano K."/>
            <person name="Ninomiya N."/>
            <person name="Nishio T."/>
            <person name="Okada M."/>
            <person name="Plessy C."/>
            <person name="Shibata K."/>
            <person name="Shiraki T."/>
            <person name="Suzuki S."/>
            <person name="Tagami M."/>
            <person name="Waki K."/>
            <person name="Watahiki A."/>
            <person name="Okamura-Oho Y."/>
            <person name="Suzuki H."/>
            <person name="Kawai J."/>
            <person name="Hayashizaki Y."/>
        </authorList>
    </citation>
    <scope>NUCLEOTIDE SEQUENCE [LARGE SCALE MRNA]</scope>
    <source>
        <strain>C57BL/6J</strain>
        <tissue>Cerebellum</tissue>
        <tissue>Retina</tissue>
        <tissue>Testis</tissue>
    </source>
</reference>
<reference key="4">
    <citation type="submission" date="2005-07" db="EMBL/GenBank/DDBJ databases">
        <authorList>
            <person name="Mural R.J."/>
            <person name="Adams M.D."/>
            <person name="Myers E.W."/>
            <person name="Smith H.O."/>
            <person name="Venter J.C."/>
        </authorList>
    </citation>
    <scope>NUCLEOTIDE SEQUENCE [LARGE SCALE GENOMIC DNA]</scope>
</reference>
<reference key="5">
    <citation type="journal article" date="2004" name="Genome Res.">
        <title>The status, quality, and expansion of the NIH full-length cDNA project: the Mammalian Gene Collection (MGC).</title>
        <authorList>
            <consortium name="The MGC Project Team"/>
        </authorList>
    </citation>
    <scope>NUCLEOTIDE SEQUENCE [LARGE SCALE MRNA]</scope>
    <source>
        <strain>FVB/N</strain>
        <tissue>Mammary tumor</tissue>
    </source>
</reference>
<name>RHBT3_MOUSE</name>
<keyword id="KW-0067">ATP-binding</keyword>
<keyword id="KW-0333">Golgi apparatus</keyword>
<keyword id="KW-0378">Hydrolase</keyword>
<keyword id="KW-0547">Nucleotide-binding</keyword>
<keyword id="KW-1185">Reference proteome</keyword>
<keyword id="KW-0677">Repeat</keyword>
<keyword id="KW-0813">Transport</keyword>
<organism>
    <name type="scientific">Mus musculus</name>
    <name type="common">Mouse</name>
    <dbReference type="NCBI Taxonomy" id="10090"/>
    <lineage>
        <taxon>Eukaryota</taxon>
        <taxon>Metazoa</taxon>
        <taxon>Chordata</taxon>
        <taxon>Craniata</taxon>
        <taxon>Vertebrata</taxon>
        <taxon>Euteleostomi</taxon>
        <taxon>Mammalia</taxon>
        <taxon>Eutheria</taxon>
        <taxon>Euarchontoglires</taxon>
        <taxon>Glires</taxon>
        <taxon>Rodentia</taxon>
        <taxon>Myomorpha</taxon>
        <taxon>Muroidea</taxon>
        <taxon>Muridae</taxon>
        <taxon>Murinae</taxon>
        <taxon>Mus</taxon>
        <taxon>Mus</taxon>
    </lineage>
</organism>
<protein>
    <recommendedName>
        <fullName>Rho-related BTB domain-containing protein 3</fullName>
        <ecNumber>3.6.1.-</ecNumber>
    </recommendedName>
</protein>
<evidence type="ECO:0000250" key="1"/>
<evidence type="ECO:0000255" key="2">
    <source>
        <dbReference type="PROSITE-ProRule" id="PRU00037"/>
    </source>
</evidence>
<evidence type="ECO:0000305" key="3"/>
<dbReference type="EC" id="3.6.1.-"/>
<dbReference type="EMBL" id="AK129234">
    <property type="protein sequence ID" value="BAC98044.1"/>
    <property type="status" value="ALT_INIT"/>
    <property type="molecule type" value="mRNA"/>
</dbReference>
<dbReference type="EMBL" id="AK020938">
    <property type="status" value="NOT_ANNOTATED_CDS"/>
    <property type="molecule type" value="mRNA"/>
</dbReference>
<dbReference type="EMBL" id="AK006650">
    <property type="protein sequence ID" value="BAB24689.1"/>
    <property type="molecule type" value="mRNA"/>
</dbReference>
<dbReference type="EMBL" id="AK139158">
    <property type="protein sequence ID" value="BAE23906.1"/>
    <property type="molecule type" value="mRNA"/>
</dbReference>
<dbReference type="EMBL" id="CH466563">
    <property type="protein sequence ID" value="EDL37111.1"/>
    <property type="molecule type" value="Genomic_DNA"/>
</dbReference>
<dbReference type="EMBL" id="BC005664">
    <property type="protein sequence ID" value="AAH05664.1"/>
    <property type="status" value="ALT_SEQ"/>
    <property type="molecule type" value="mRNA"/>
</dbReference>
<dbReference type="EMBL" id="BC050836">
    <property type="protein sequence ID" value="AAH50836.1"/>
    <property type="molecule type" value="mRNA"/>
</dbReference>
<dbReference type="CCDS" id="CCDS26652.1"/>
<dbReference type="RefSeq" id="NP_082769.1">
    <property type="nucleotide sequence ID" value="NM_028493.3"/>
</dbReference>
<dbReference type="SMR" id="Q9CTN4"/>
<dbReference type="BioGRID" id="215902">
    <property type="interactions" value="4"/>
</dbReference>
<dbReference type="FunCoup" id="Q9CTN4">
    <property type="interactions" value="1186"/>
</dbReference>
<dbReference type="STRING" id="10090.ENSMUSP00000022078"/>
<dbReference type="iPTMnet" id="Q9CTN4"/>
<dbReference type="PhosphoSitePlus" id="Q9CTN4"/>
<dbReference type="SwissPalm" id="Q9CTN4"/>
<dbReference type="jPOST" id="Q9CTN4"/>
<dbReference type="PaxDb" id="10090-ENSMUSP00000022078"/>
<dbReference type="ProteomicsDB" id="254862"/>
<dbReference type="Pumba" id="Q9CTN4"/>
<dbReference type="Antibodypedia" id="636">
    <property type="antibodies" value="132 antibodies from 27 providers"/>
</dbReference>
<dbReference type="Ensembl" id="ENSMUST00000022078.12">
    <property type="protein sequence ID" value="ENSMUSP00000022078.6"/>
    <property type="gene ID" value="ENSMUSG00000021589.14"/>
</dbReference>
<dbReference type="GeneID" id="73296"/>
<dbReference type="KEGG" id="mmu:73296"/>
<dbReference type="UCSC" id="uc007rfy.1">
    <property type="organism name" value="mouse"/>
</dbReference>
<dbReference type="AGR" id="MGI:1920546"/>
<dbReference type="CTD" id="22836"/>
<dbReference type="MGI" id="MGI:1920546">
    <property type="gene designation" value="Rhobtb3"/>
</dbReference>
<dbReference type="VEuPathDB" id="HostDB:ENSMUSG00000021589"/>
<dbReference type="eggNOG" id="KOG0393">
    <property type="taxonomic scope" value="Eukaryota"/>
</dbReference>
<dbReference type="GeneTree" id="ENSGT00850000132411"/>
<dbReference type="HOGENOM" id="CLU_029897_0_0_1"/>
<dbReference type="InParanoid" id="Q9CTN4"/>
<dbReference type="OMA" id="CACRERD"/>
<dbReference type="OrthoDB" id="10251809at2759"/>
<dbReference type="PhylomeDB" id="Q9CTN4"/>
<dbReference type="TreeFam" id="TF323347"/>
<dbReference type="Reactome" id="R-MMU-6811440">
    <property type="pathway name" value="Retrograde transport at the Trans-Golgi-Network"/>
</dbReference>
<dbReference type="Reactome" id="R-MMU-9706019">
    <property type="pathway name" value="RHOBTB3 ATPase cycle"/>
</dbReference>
<dbReference type="BioGRID-ORCS" id="73296">
    <property type="hits" value="4 hits in 78 CRISPR screens"/>
</dbReference>
<dbReference type="ChiTaRS" id="Rhobtb3">
    <property type="organism name" value="mouse"/>
</dbReference>
<dbReference type="PRO" id="PR:Q9CTN4"/>
<dbReference type="Proteomes" id="UP000000589">
    <property type="component" value="Chromosome 13"/>
</dbReference>
<dbReference type="RNAct" id="Q9CTN4">
    <property type="molecule type" value="protein"/>
</dbReference>
<dbReference type="Bgee" id="ENSMUSG00000021589">
    <property type="expression patterns" value="Expressed in manus and 226 other cell types or tissues"/>
</dbReference>
<dbReference type="ExpressionAtlas" id="Q9CTN4">
    <property type="expression patterns" value="baseline and differential"/>
</dbReference>
<dbReference type="GO" id="GO:0005737">
    <property type="term" value="C:cytoplasm"/>
    <property type="evidence" value="ECO:0000314"/>
    <property type="project" value="MGI"/>
</dbReference>
<dbReference type="GO" id="GO:0005829">
    <property type="term" value="C:cytosol"/>
    <property type="evidence" value="ECO:0007669"/>
    <property type="project" value="GOC"/>
</dbReference>
<dbReference type="GO" id="GO:0005794">
    <property type="term" value="C:Golgi apparatus"/>
    <property type="evidence" value="ECO:0007669"/>
    <property type="project" value="UniProtKB-SubCell"/>
</dbReference>
<dbReference type="GO" id="GO:0005524">
    <property type="term" value="F:ATP binding"/>
    <property type="evidence" value="ECO:0000250"/>
    <property type="project" value="UniProtKB"/>
</dbReference>
<dbReference type="GO" id="GO:0016887">
    <property type="term" value="F:ATP hydrolysis activity"/>
    <property type="evidence" value="ECO:0000250"/>
    <property type="project" value="UniProtKB"/>
</dbReference>
<dbReference type="GO" id="GO:0003924">
    <property type="term" value="F:GTPase activity"/>
    <property type="evidence" value="ECO:0007669"/>
    <property type="project" value="InterPro"/>
</dbReference>
<dbReference type="GO" id="GO:0031267">
    <property type="term" value="F:small GTPase binding"/>
    <property type="evidence" value="ECO:0007669"/>
    <property type="project" value="Ensembl"/>
</dbReference>
<dbReference type="GO" id="GO:0008584">
    <property type="term" value="P:male gonad development"/>
    <property type="evidence" value="ECO:0000315"/>
    <property type="project" value="MGI"/>
</dbReference>
<dbReference type="GO" id="GO:0042147">
    <property type="term" value="P:retrograde transport, endosome to Golgi"/>
    <property type="evidence" value="ECO:0000250"/>
    <property type="project" value="UniProtKB"/>
</dbReference>
<dbReference type="CDD" id="cd18532">
    <property type="entry name" value="BACK_RHOBTB3"/>
    <property type="match status" value="1"/>
</dbReference>
<dbReference type="CDD" id="cd18357">
    <property type="entry name" value="BTB1_POZ_RHOBTB3"/>
    <property type="match status" value="1"/>
</dbReference>
<dbReference type="CDD" id="cd18360">
    <property type="entry name" value="BTB2_POZ_RHOBTB3"/>
    <property type="match status" value="1"/>
</dbReference>
<dbReference type="FunFam" id="3.40.50.300:FF:000907">
    <property type="entry name" value="Rho related BTB domain containing 3"/>
    <property type="match status" value="1"/>
</dbReference>
<dbReference type="FunFam" id="3.30.710.10:FF:000076">
    <property type="entry name" value="rho-related BTB domain-containing protein 3"/>
    <property type="match status" value="1"/>
</dbReference>
<dbReference type="FunFam" id="3.30.710.10:FF:000111">
    <property type="entry name" value="rho-related BTB domain-containing protein 3 isoform X1"/>
    <property type="match status" value="1"/>
</dbReference>
<dbReference type="Gene3D" id="3.40.50.300">
    <property type="entry name" value="P-loop containing nucleotide triphosphate hydrolases"/>
    <property type="match status" value="1"/>
</dbReference>
<dbReference type="Gene3D" id="3.30.710.10">
    <property type="entry name" value="Potassium Channel Kv1.1, Chain A"/>
    <property type="match status" value="2"/>
</dbReference>
<dbReference type="InterPro" id="IPR000210">
    <property type="entry name" value="BTB/POZ_dom"/>
</dbReference>
<dbReference type="InterPro" id="IPR027417">
    <property type="entry name" value="P-loop_NTPase"/>
</dbReference>
<dbReference type="InterPro" id="IPR011333">
    <property type="entry name" value="SKP1/BTB/POZ_sf"/>
</dbReference>
<dbReference type="InterPro" id="IPR001806">
    <property type="entry name" value="Small_GTPase"/>
</dbReference>
<dbReference type="PANTHER" id="PTHR24413">
    <property type="entry name" value="SPECKLE-TYPE POZ PROTEIN"/>
    <property type="match status" value="1"/>
</dbReference>
<dbReference type="Pfam" id="PF00651">
    <property type="entry name" value="BTB"/>
    <property type="match status" value="1"/>
</dbReference>
<dbReference type="Pfam" id="PF00071">
    <property type="entry name" value="Ras"/>
    <property type="match status" value="1"/>
</dbReference>
<dbReference type="SMART" id="SM00225">
    <property type="entry name" value="BTB"/>
    <property type="match status" value="1"/>
</dbReference>
<dbReference type="SUPFAM" id="SSF52540">
    <property type="entry name" value="P-loop containing nucleoside triphosphate hydrolases"/>
    <property type="match status" value="1"/>
</dbReference>
<dbReference type="SUPFAM" id="SSF54695">
    <property type="entry name" value="POZ domain"/>
    <property type="match status" value="2"/>
</dbReference>
<dbReference type="PROSITE" id="PS50097">
    <property type="entry name" value="BTB"/>
    <property type="match status" value="2"/>
</dbReference>
<accession>Q9CTN4</accession>
<accession>Q05DP2</accession>
<accession>Q3UTS4</accession>
<accession>Q80X55</accession>
<accession>Q9CVT0</accession>
<comment type="function">
    <text evidence="1">Rab9-regulated ATPase required for endosome to Golgi transport. Involved in transport vesicle docking at the Golgi complex, possibly by participating in release M6PRBP1/TIP47 from vesicles to permit their efficient docking and fusion at the Golgi. Specifically binds Rab9, but not other Rab proteins. Has low intrinsic ATPase activity due to autoinhibition, which is relieved by Rab9 (By similarity).</text>
</comment>
<comment type="subunit">
    <text evidence="1">Interacts with RAB9A and RAB9B (at lower level compared to RAB9A-binding). Interacts with M6PRBP1/TIP47 (By similarity).</text>
</comment>
<comment type="subcellular location">
    <subcellularLocation>
        <location evidence="1">Golgi apparatus</location>
    </subcellularLocation>
</comment>
<comment type="sequence caution" evidence="3">
    <conflict type="miscellaneous discrepancy">
        <sequence resource="EMBL-CDS" id="AAH05664"/>
    </conflict>
    <text>Contaminating sequence. Potential poly-A sequence.</text>
</comment>
<comment type="sequence caution" evidence="3">
    <conflict type="erroneous initiation">
        <sequence resource="EMBL-CDS" id="BAC98044"/>
    </conflict>
</comment>
<feature type="chain" id="PRO_0000198965" description="Rho-related BTB domain-containing protein 3">
    <location>
        <begin position="1"/>
        <end position="611"/>
    </location>
</feature>
<feature type="domain" description="BTB 1" evidence="2">
    <location>
        <begin position="254"/>
        <end position="356"/>
    </location>
</feature>
<feature type="domain" description="BTB 2" evidence="2">
    <location>
        <begin position="420"/>
        <end position="487"/>
    </location>
</feature>
<feature type="region of interest" description="Rho-like">
    <location>
        <begin position="1"/>
        <end position="175"/>
    </location>
</feature>
<feature type="region of interest" description="Interaction with Rab9" evidence="1">
    <location>
        <begin position="420"/>
        <end position="611"/>
    </location>
</feature>
<feature type="sequence conflict" description="In Ref. 3; BAB24689." evidence="3" ref="3">
    <original>N</original>
    <variation>H</variation>
    <location>
        <position position="588"/>
    </location>
</feature>
<sequence>MSIHIVALGNEGDTFHQDNRPSGLIRTYLGRSPLVSGDESSLLLNAASTVARPVFTEYQASAFGNVKLVVHDCPVWDIFDSDWYTSRNLIGGADIIVIKYNVNDKFSFHEVKDNYIPVIKRASNSVPVIIAAVGTRQNEELPCTCPLCTSDRGSCVTTTEGIQLAKELGATYLELHSLDDFYIGKYFGGVLEYFMIQALNQKTSEKMKKRKMTSSFHGIRPPQLEQPEKMPVLKAEASHYHSDLNNLLLCCQCVDVVFYHPEVTGVVEAHKIVLCSVSHVFMLLFNVKSPADIQDSSIIRTTQDLFAINRDAVLPGASQEAPSNPPLPVIVKDALFCSCLSDILRFIYSGAFQWEELEEDVRRKLKDSGDVSDIIEKVKCILKTPGKINCLRNCKTYQARKPLWFYNTSLKFFLNKPMLADVVFEIQGATVPAHRAILVARCEVMAAMFNGNYMEAKSVLIPVYGVSKETFLSFLEYLYTDSCCPAGIFQAMCLLICAEMYQVSRLQHICELFIITQLQSMPSRELASMNLDIVDLLKKAKFHHSDCLSTWLLHFIATNYLIFSQKPEFQDLSVEERSFVEKHRWPSNMYLKQLAEYRKYIHSRKCRCLVM</sequence>